<gene>
    <name type="primary">ribH</name>
    <name type="ordered locus">MJ0303</name>
</gene>
<accession>Q57751</accession>
<feature type="chain" id="PRO_0000134843" description="6,7-dimethyl-8-ribityllumazine synthase">
    <location>
        <begin position="1"/>
        <end position="141"/>
    </location>
</feature>
<feature type="active site" description="Proton donor" evidence="2">
    <location>
        <position position="78"/>
    </location>
</feature>
<feature type="binding site" evidence="1">
    <location>
        <position position="14"/>
    </location>
    <ligand>
        <name>5-amino-6-(D-ribitylamino)uracil</name>
        <dbReference type="ChEBI" id="CHEBI:15934"/>
    </ligand>
</feature>
<feature type="binding site" evidence="1">
    <location>
        <begin position="46"/>
        <end position="48"/>
    </location>
    <ligand>
        <name>5-amino-6-(D-ribitylamino)uracil</name>
        <dbReference type="ChEBI" id="CHEBI:15934"/>
    </ligand>
</feature>
<feature type="binding site" evidence="1">
    <location>
        <begin position="70"/>
        <end position="72"/>
    </location>
    <ligand>
        <name>5-amino-6-(D-ribitylamino)uracil</name>
        <dbReference type="ChEBI" id="CHEBI:15934"/>
    </ligand>
</feature>
<feature type="binding site" evidence="1">
    <location>
        <begin position="75"/>
        <end position="76"/>
    </location>
    <ligand>
        <name>(2S)-2-hydroxy-3-oxobutyl phosphate</name>
        <dbReference type="ChEBI" id="CHEBI:58830"/>
    </ligand>
</feature>
<feature type="binding site" evidence="1">
    <location>
        <position position="103"/>
    </location>
    <ligand>
        <name>5-amino-6-(D-ribitylamino)uracil</name>
        <dbReference type="ChEBI" id="CHEBI:15934"/>
    </ligand>
</feature>
<feature type="binding site" evidence="1">
    <location>
        <position position="118"/>
    </location>
    <ligand>
        <name>(2S)-2-hydroxy-3-oxobutyl phosphate</name>
        <dbReference type="ChEBI" id="CHEBI:58830"/>
    </ligand>
</feature>
<name>RISB_METJA</name>
<reference key="1">
    <citation type="journal article" date="1996" name="Science">
        <title>Complete genome sequence of the methanogenic archaeon, Methanococcus jannaschii.</title>
        <authorList>
            <person name="Bult C.J."/>
            <person name="White O."/>
            <person name="Olsen G.J."/>
            <person name="Zhou L."/>
            <person name="Fleischmann R.D."/>
            <person name="Sutton G.G."/>
            <person name="Blake J.A."/>
            <person name="FitzGerald L.M."/>
            <person name="Clayton R.A."/>
            <person name="Gocayne J.D."/>
            <person name="Kerlavage A.R."/>
            <person name="Dougherty B.A."/>
            <person name="Tomb J.-F."/>
            <person name="Adams M.D."/>
            <person name="Reich C.I."/>
            <person name="Overbeek R."/>
            <person name="Kirkness E.F."/>
            <person name="Weinstock K.G."/>
            <person name="Merrick J.M."/>
            <person name="Glodek A."/>
            <person name="Scott J.L."/>
            <person name="Geoghagen N.S.M."/>
            <person name="Weidman J.F."/>
            <person name="Fuhrmann J.L."/>
            <person name="Nguyen D."/>
            <person name="Utterback T.R."/>
            <person name="Kelley J.M."/>
            <person name="Peterson J.D."/>
            <person name="Sadow P.W."/>
            <person name="Hanna M.C."/>
            <person name="Cotton M.D."/>
            <person name="Roberts K.M."/>
            <person name="Hurst M.A."/>
            <person name="Kaine B.P."/>
            <person name="Borodovsky M."/>
            <person name="Klenk H.-P."/>
            <person name="Fraser C.M."/>
            <person name="Smith H.O."/>
            <person name="Woese C.R."/>
            <person name="Venter J.C."/>
        </authorList>
    </citation>
    <scope>NUCLEOTIDE SEQUENCE [LARGE SCALE GENOMIC DNA]</scope>
    <source>
        <strain>ATCC 43067 / DSM 2661 / JAL-1 / JCM 10045 / NBRC 100440</strain>
    </source>
</reference>
<reference key="2">
    <citation type="journal article" date="2003" name="Eur. J. Biochem.">
        <title>Biosynthesis of riboflavin in archaea. 6,7-dimethyl-8-ribityllumazine synthase of Methanococcus jannaschii.</title>
        <authorList>
            <person name="Haase I."/>
            <person name="Mortl S."/>
            <person name="Kohler P."/>
            <person name="Bacher A."/>
            <person name="Fischer M."/>
        </authorList>
    </citation>
    <scope>PROTEIN SEQUENCE OF 1-10</scope>
    <scope>FUNCTION</scope>
    <scope>CATALYTIC ACTIVITY</scope>
    <scope>KINETIC PARAMETERS</scope>
    <scope>SUBUNIT</scope>
    <scope>MASS SPECTROMETRY</scope>
    <scope>PATHWAY</scope>
</reference>
<proteinExistence type="evidence at protein level"/>
<sequence>MVLMVNLGFVIAEFNRDITYMMEKVAEEHAEFLGATVKYKIVVPGVFDMPLAVKKLLEKDDVDAVVTIGCVIEGETEHDEIVVHNAARKIADLALQYDKPVTLGISGPGMTRLQAQERVDYGKRAVEAAVKMVKRLKALEE</sequence>
<evidence type="ECO:0000250" key="1"/>
<evidence type="ECO:0000255" key="2"/>
<evidence type="ECO:0000269" key="3">
    <source>
    </source>
</evidence>
<evidence type="ECO:0000305" key="4"/>
<evidence type="ECO:0000305" key="5">
    <source>
    </source>
</evidence>
<comment type="function">
    <text evidence="3">Catalyzes the formation of 6,7-dimethyl-8-ribityllumazine by condensation of 5-amino-6-(D-ribitylamino)uracil with 3,4-dihydroxy-2-butanone 4-phosphate. This is the penultimate step in the biosynthesis of riboflavin.</text>
</comment>
<comment type="catalytic activity">
    <reaction evidence="3">
        <text>(2S)-2-hydroxy-3-oxobutyl phosphate + 5-amino-6-(D-ribitylamino)uracil = 6,7-dimethyl-8-(1-D-ribityl)lumazine + phosphate + 2 H2O + H(+)</text>
        <dbReference type="Rhea" id="RHEA:26152"/>
        <dbReference type="ChEBI" id="CHEBI:15377"/>
        <dbReference type="ChEBI" id="CHEBI:15378"/>
        <dbReference type="ChEBI" id="CHEBI:15934"/>
        <dbReference type="ChEBI" id="CHEBI:43474"/>
        <dbReference type="ChEBI" id="CHEBI:58201"/>
        <dbReference type="ChEBI" id="CHEBI:58830"/>
        <dbReference type="EC" id="2.5.1.78"/>
    </reaction>
</comment>
<comment type="biophysicochemical properties">
    <kinetics>
        <KM evidence="3">12.5 uM for 5-amino-6-(D-ribitylamino)uracil (at 37 degrees Celsius and pH 7.0)</KM>
        <KM evidence="3">52 uM for 3,4-dihydroxy-2-butanone 4-phosphate (at 37 degrees Celsius and pH 7.0)</KM>
        <Vmax evidence="3">11.0 nmol/min/mg enzyme (at 37 degrees Celsius and pH 7.0)</Vmax>
        <Vmax evidence="3">90.0 nmol/min/mg enzyme (at 70 degrees Celsius and pH 7.0)</Vmax>
    </kinetics>
</comment>
<comment type="pathway">
    <text evidence="3">Cofactor biosynthesis; riboflavin biosynthesis; riboflavin from 2-hydroxy-3-oxobutyl phosphate and 5-amino-6-(D-ribitylamino)uracil: step 1/2.</text>
</comment>
<comment type="subunit">
    <text evidence="5">Forms an icosahedral capsid composed of 60 subunits, arranged as a dodecamer of pentamers.</text>
</comment>
<comment type="mass spectrometry"/>
<comment type="similarity">
    <text evidence="4">Belongs to the DMRL synthase family.</text>
</comment>
<organism>
    <name type="scientific">Methanocaldococcus jannaschii (strain ATCC 43067 / DSM 2661 / JAL-1 / JCM 10045 / NBRC 100440)</name>
    <name type="common">Methanococcus jannaschii</name>
    <dbReference type="NCBI Taxonomy" id="243232"/>
    <lineage>
        <taxon>Archaea</taxon>
        <taxon>Methanobacteriati</taxon>
        <taxon>Methanobacteriota</taxon>
        <taxon>Methanomada group</taxon>
        <taxon>Methanococci</taxon>
        <taxon>Methanococcales</taxon>
        <taxon>Methanocaldococcaceae</taxon>
        <taxon>Methanocaldococcus</taxon>
    </lineage>
</organism>
<keyword id="KW-0903">Direct protein sequencing</keyword>
<keyword id="KW-1185">Reference proteome</keyword>
<keyword id="KW-0686">Riboflavin biosynthesis</keyword>
<keyword id="KW-0808">Transferase</keyword>
<protein>
    <recommendedName>
        <fullName>6,7-dimethyl-8-ribityllumazine synthase</fullName>
        <shortName>DMRL synthase</shortName>
        <shortName>LS</shortName>
        <shortName>Lumazine synthase</shortName>
        <ecNumber>2.5.1.78</ecNumber>
    </recommendedName>
</protein>
<dbReference type="EC" id="2.5.1.78"/>
<dbReference type="EMBL" id="L77117">
    <property type="protein sequence ID" value="AAB98290.1"/>
    <property type="molecule type" value="Genomic_DNA"/>
</dbReference>
<dbReference type="PIR" id="H64337">
    <property type="entry name" value="H64337"/>
</dbReference>
<dbReference type="SMR" id="Q57751"/>
<dbReference type="FunCoup" id="Q57751">
    <property type="interactions" value="119"/>
</dbReference>
<dbReference type="STRING" id="243232.MJ_0303"/>
<dbReference type="PaxDb" id="243232-MJ_0303"/>
<dbReference type="EnsemblBacteria" id="AAB98290">
    <property type="protein sequence ID" value="AAB98290"/>
    <property type="gene ID" value="MJ_0303"/>
</dbReference>
<dbReference type="KEGG" id="mja:MJ_0303"/>
<dbReference type="eggNOG" id="arCOG01323">
    <property type="taxonomic scope" value="Archaea"/>
</dbReference>
<dbReference type="HOGENOM" id="CLU_089358_3_1_2"/>
<dbReference type="InParanoid" id="Q57751"/>
<dbReference type="PhylomeDB" id="Q57751"/>
<dbReference type="BioCyc" id="MetaCyc:MONOMER-14604"/>
<dbReference type="BRENDA" id="2.5.1.78">
    <property type="organism ID" value="3260"/>
</dbReference>
<dbReference type="SABIO-RK" id="Q57751"/>
<dbReference type="UniPathway" id="UPA00275">
    <property type="reaction ID" value="UER00404"/>
</dbReference>
<dbReference type="Proteomes" id="UP000000805">
    <property type="component" value="Chromosome"/>
</dbReference>
<dbReference type="GO" id="GO:0005737">
    <property type="term" value="C:cytoplasm"/>
    <property type="evidence" value="ECO:0000318"/>
    <property type="project" value="GO_Central"/>
</dbReference>
<dbReference type="GO" id="GO:0009349">
    <property type="term" value="C:riboflavin synthase complex"/>
    <property type="evidence" value="ECO:0007669"/>
    <property type="project" value="InterPro"/>
</dbReference>
<dbReference type="GO" id="GO:0000906">
    <property type="term" value="F:6,7-dimethyl-8-ribityllumazine synthase activity"/>
    <property type="evidence" value="ECO:0000318"/>
    <property type="project" value="GO_Central"/>
</dbReference>
<dbReference type="GO" id="GO:0009231">
    <property type="term" value="P:riboflavin biosynthetic process"/>
    <property type="evidence" value="ECO:0000318"/>
    <property type="project" value="GO_Central"/>
</dbReference>
<dbReference type="CDD" id="cd09211">
    <property type="entry name" value="Lumazine_synthase_archaeal"/>
    <property type="match status" value="1"/>
</dbReference>
<dbReference type="FunFam" id="3.40.50.960:FF:000003">
    <property type="entry name" value="6,7-dimethyl-8-ribityllumazine synthase"/>
    <property type="match status" value="1"/>
</dbReference>
<dbReference type="Gene3D" id="3.40.50.960">
    <property type="entry name" value="Lumazine/riboflavin synthase"/>
    <property type="match status" value="1"/>
</dbReference>
<dbReference type="HAMAP" id="MF_00178">
    <property type="entry name" value="Lumazine_synth"/>
    <property type="match status" value="1"/>
</dbReference>
<dbReference type="InterPro" id="IPR034964">
    <property type="entry name" value="LS"/>
</dbReference>
<dbReference type="InterPro" id="IPR002180">
    <property type="entry name" value="LS/RS"/>
</dbReference>
<dbReference type="InterPro" id="IPR036467">
    <property type="entry name" value="LS/RS_sf"/>
</dbReference>
<dbReference type="NCBIfam" id="TIGR00114">
    <property type="entry name" value="lumazine-synth"/>
    <property type="match status" value="1"/>
</dbReference>
<dbReference type="PANTHER" id="PTHR21058:SF0">
    <property type="entry name" value="6,7-DIMETHYL-8-RIBITYLLUMAZINE SYNTHASE"/>
    <property type="match status" value="1"/>
</dbReference>
<dbReference type="PANTHER" id="PTHR21058">
    <property type="entry name" value="6,7-DIMETHYL-8-RIBITYLLUMAZINE SYNTHASE DMRL SYNTHASE LUMAZINE SYNTHASE"/>
    <property type="match status" value="1"/>
</dbReference>
<dbReference type="Pfam" id="PF00885">
    <property type="entry name" value="DMRL_synthase"/>
    <property type="match status" value="1"/>
</dbReference>
<dbReference type="SUPFAM" id="SSF52121">
    <property type="entry name" value="Lumazine synthase"/>
    <property type="match status" value="1"/>
</dbReference>